<dbReference type="EC" id="4.3.2.10" evidence="1"/>
<dbReference type="EMBL" id="CP001614">
    <property type="protein sequence ID" value="ACR12165.1"/>
    <property type="molecule type" value="Genomic_DNA"/>
</dbReference>
<dbReference type="RefSeq" id="WP_015818277.1">
    <property type="nucleotide sequence ID" value="NC_012997.1"/>
</dbReference>
<dbReference type="SMR" id="C5BMF5"/>
<dbReference type="STRING" id="377629.TERTU_0420"/>
<dbReference type="KEGG" id="ttu:TERTU_0420"/>
<dbReference type="eggNOG" id="COG0107">
    <property type="taxonomic scope" value="Bacteria"/>
</dbReference>
<dbReference type="HOGENOM" id="CLU_048577_4_0_6"/>
<dbReference type="OrthoDB" id="9781903at2"/>
<dbReference type="UniPathway" id="UPA00031">
    <property type="reaction ID" value="UER00010"/>
</dbReference>
<dbReference type="Proteomes" id="UP000009080">
    <property type="component" value="Chromosome"/>
</dbReference>
<dbReference type="GO" id="GO:0005737">
    <property type="term" value="C:cytoplasm"/>
    <property type="evidence" value="ECO:0007669"/>
    <property type="project" value="UniProtKB-SubCell"/>
</dbReference>
<dbReference type="GO" id="GO:0000107">
    <property type="term" value="F:imidazoleglycerol-phosphate synthase activity"/>
    <property type="evidence" value="ECO:0007669"/>
    <property type="project" value="UniProtKB-UniRule"/>
</dbReference>
<dbReference type="GO" id="GO:0016829">
    <property type="term" value="F:lyase activity"/>
    <property type="evidence" value="ECO:0007669"/>
    <property type="project" value="UniProtKB-KW"/>
</dbReference>
<dbReference type="GO" id="GO:0000105">
    <property type="term" value="P:L-histidine biosynthetic process"/>
    <property type="evidence" value="ECO:0007669"/>
    <property type="project" value="UniProtKB-UniRule"/>
</dbReference>
<dbReference type="CDD" id="cd04731">
    <property type="entry name" value="HisF"/>
    <property type="match status" value="1"/>
</dbReference>
<dbReference type="FunFam" id="3.20.20.70:FF:000006">
    <property type="entry name" value="Imidazole glycerol phosphate synthase subunit HisF"/>
    <property type="match status" value="1"/>
</dbReference>
<dbReference type="Gene3D" id="3.20.20.70">
    <property type="entry name" value="Aldolase class I"/>
    <property type="match status" value="1"/>
</dbReference>
<dbReference type="HAMAP" id="MF_01013">
    <property type="entry name" value="HisF"/>
    <property type="match status" value="1"/>
</dbReference>
<dbReference type="InterPro" id="IPR013785">
    <property type="entry name" value="Aldolase_TIM"/>
</dbReference>
<dbReference type="InterPro" id="IPR006062">
    <property type="entry name" value="His_biosynth"/>
</dbReference>
<dbReference type="InterPro" id="IPR004651">
    <property type="entry name" value="HisF"/>
</dbReference>
<dbReference type="InterPro" id="IPR050064">
    <property type="entry name" value="IGPS_HisA/HisF"/>
</dbReference>
<dbReference type="InterPro" id="IPR011060">
    <property type="entry name" value="RibuloseP-bd_barrel"/>
</dbReference>
<dbReference type="NCBIfam" id="TIGR00735">
    <property type="entry name" value="hisF"/>
    <property type="match status" value="1"/>
</dbReference>
<dbReference type="PANTHER" id="PTHR21235:SF2">
    <property type="entry name" value="IMIDAZOLE GLYCEROL PHOSPHATE SYNTHASE HISHF"/>
    <property type="match status" value="1"/>
</dbReference>
<dbReference type="PANTHER" id="PTHR21235">
    <property type="entry name" value="IMIDAZOLE GLYCEROL PHOSPHATE SYNTHASE SUBUNIT HISF/H IGP SYNTHASE SUBUNIT HISF/H"/>
    <property type="match status" value="1"/>
</dbReference>
<dbReference type="Pfam" id="PF00977">
    <property type="entry name" value="His_biosynth"/>
    <property type="match status" value="1"/>
</dbReference>
<dbReference type="SUPFAM" id="SSF51366">
    <property type="entry name" value="Ribulose-phoshate binding barrel"/>
    <property type="match status" value="1"/>
</dbReference>
<name>HIS6_TERTT</name>
<comment type="function">
    <text evidence="1">IGPS catalyzes the conversion of PRFAR and glutamine to IGP, AICAR and glutamate. The HisF subunit catalyzes the cyclization activity that produces IGP and AICAR from PRFAR using the ammonia provided by the HisH subunit.</text>
</comment>
<comment type="catalytic activity">
    <reaction evidence="1">
        <text>5-[(5-phospho-1-deoxy-D-ribulos-1-ylimino)methylamino]-1-(5-phospho-beta-D-ribosyl)imidazole-4-carboxamide + L-glutamine = D-erythro-1-(imidazol-4-yl)glycerol 3-phosphate + 5-amino-1-(5-phospho-beta-D-ribosyl)imidazole-4-carboxamide + L-glutamate + H(+)</text>
        <dbReference type="Rhea" id="RHEA:24793"/>
        <dbReference type="ChEBI" id="CHEBI:15378"/>
        <dbReference type="ChEBI" id="CHEBI:29985"/>
        <dbReference type="ChEBI" id="CHEBI:58278"/>
        <dbReference type="ChEBI" id="CHEBI:58359"/>
        <dbReference type="ChEBI" id="CHEBI:58475"/>
        <dbReference type="ChEBI" id="CHEBI:58525"/>
        <dbReference type="EC" id="4.3.2.10"/>
    </reaction>
</comment>
<comment type="pathway">
    <text evidence="1">Amino-acid biosynthesis; L-histidine biosynthesis; L-histidine from 5-phospho-alpha-D-ribose 1-diphosphate: step 5/9.</text>
</comment>
<comment type="subunit">
    <text evidence="1">Heterodimer of HisH and HisF.</text>
</comment>
<comment type="subcellular location">
    <subcellularLocation>
        <location evidence="1">Cytoplasm</location>
    </subcellularLocation>
</comment>
<comment type="similarity">
    <text evidence="1">Belongs to the HisA/HisF family.</text>
</comment>
<evidence type="ECO:0000255" key="1">
    <source>
        <dbReference type="HAMAP-Rule" id="MF_01013"/>
    </source>
</evidence>
<reference key="1">
    <citation type="journal article" date="2009" name="PLoS ONE">
        <title>The complete genome of Teredinibacter turnerae T7901: an intracellular endosymbiont of marine wood-boring bivalves (shipworms).</title>
        <authorList>
            <person name="Yang J.C."/>
            <person name="Madupu R."/>
            <person name="Durkin A.S."/>
            <person name="Ekborg N.A."/>
            <person name="Pedamallu C.S."/>
            <person name="Hostetler J.B."/>
            <person name="Radune D."/>
            <person name="Toms B.S."/>
            <person name="Henrissat B."/>
            <person name="Coutinho P.M."/>
            <person name="Schwarz S."/>
            <person name="Field L."/>
            <person name="Trindade-Silva A.E."/>
            <person name="Soares C.A.G."/>
            <person name="Elshahawi S."/>
            <person name="Hanora A."/>
            <person name="Schmidt E.W."/>
            <person name="Haygood M.G."/>
            <person name="Posfai J."/>
            <person name="Benner J."/>
            <person name="Madinger C."/>
            <person name="Nove J."/>
            <person name="Anton B."/>
            <person name="Chaudhary K."/>
            <person name="Foster J."/>
            <person name="Holman A."/>
            <person name="Kumar S."/>
            <person name="Lessard P.A."/>
            <person name="Luyten Y.A."/>
            <person name="Slatko B."/>
            <person name="Wood N."/>
            <person name="Wu B."/>
            <person name="Teplitski M."/>
            <person name="Mougous J.D."/>
            <person name="Ward N."/>
            <person name="Eisen J.A."/>
            <person name="Badger J.H."/>
            <person name="Distel D.L."/>
        </authorList>
    </citation>
    <scope>NUCLEOTIDE SEQUENCE [LARGE SCALE GENOMIC DNA]</scope>
    <source>
        <strain>ATCC 39867 / T7901</strain>
    </source>
</reference>
<organism>
    <name type="scientific">Teredinibacter turnerae (strain ATCC 39867 / T7901)</name>
    <dbReference type="NCBI Taxonomy" id="377629"/>
    <lineage>
        <taxon>Bacteria</taxon>
        <taxon>Pseudomonadati</taxon>
        <taxon>Pseudomonadota</taxon>
        <taxon>Gammaproteobacteria</taxon>
        <taxon>Cellvibrionales</taxon>
        <taxon>Cellvibrionaceae</taxon>
        <taxon>Teredinibacter</taxon>
    </lineage>
</organism>
<gene>
    <name evidence="1" type="primary">hisF</name>
    <name type="ordered locus">TERTU_0420</name>
</gene>
<keyword id="KW-0028">Amino-acid biosynthesis</keyword>
<keyword id="KW-0963">Cytoplasm</keyword>
<keyword id="KW-0368">Histidine biosynthesis</keyword>
<keyword id="KW-0456">Lyase</keyword>
<keyword id="KW-1185">Reference proteome</keyword>
<accession>C5BMF5</accession>
<proteinExistence type="inferred from homology"/>
<protein>
    <recommendedName>
        <fullName evidence="1">Imidazole glycerol phosphate synthase subunit HisF</fullName>
        <ecNumber evidence="1">4.3.2.10</ecNumber>
    </recommendedName>
    <alternativeName>
        <fullName evidence="1">IGP synthase cyclase subunit</fullName>
    </alternativeName>
    <alternativeName>
        <fullName evidence="1">IGP synthase subunit HisF</fullName>
    </alternativeName>
    <alternativeName>
        <fullName evidence="1">ImGP synthase subunit HisF</fullName>
        <shortName evidence="1">IGPS subunit HisF</shortName>
    </alternativeName>
</protein>
<feature type="chain" id="PRO_1000213218" description="Imidazole glycerol phosphate synthase subunit HisF">
    <location>
        <begin position="1"/>
        <end position="257"/>
    </location>
</feature>
<feature type="active site" evidence="1">
    <location>
        <position position="12"/>
    </location>
</feature>
<feature type="active site" evidence="1">
    <location>
        <position position="131"/>
    </location>
</feature>
<sequence length="257" mass="27516">MPLAKRIIPCLDVDKGRVVKGVQFVDIRDAGDPVEVAKKYNEQGADEITFLDITASHEARETTINTVEKIAAEVFIPLTVGGGIRTLDDIRNMLNAGADKVSINSAAVKDPDFVRIAAEKFGSQCIVVAIDAKRVSADGEPGRWEIFTHGGRNPTGIDAVEWAVRMTEYGAGEILLTSMDRDGTKDGFDLGVTRAISEAVRVPVIASGGVGNLQHLVDGVIKGGADAVLAASIFHFGEYTVPEAKAYMEQHGIEVRL</sequence>